<dbReference type="EC" id="2.8.1.8" evidence="1"/>
<dbReference type="EMBL" id="AE016958">
    <property type="protein sequence ID" value="AAS04276.1"/>
    <property type="molecule type" value="Genomic_DNA"/>
</dbReference>
<dbReference type="RefSeq" id="WP_003872329.1">
    <property type="nucleotide sequence ID" value="NZ_CP106873.1"/>
</dbReference>
<dbReference type="SMR" id="P61197"/>
<dbReference type="STRING" id="262316.MAP_1959"/>
<dbReference type="KEGG" id="mpa:MAP_1959"/>
<dbReference type="PATRIC" id="fig|262316.17.peg.2079"/>
<dbReference type="eggNOG" id="COG0320">
    <property type="taxonomic scope" value="Bacteria"/>
</dbReference>
<dbReference type="HOGENOM" id="CLU_033144_2_1_11"/>
<dbReference type="UniPathway" id="UPA00538">
    <property type="reaction ID" value="UER00593"/>
</dbReference>
<dbReference type="Proteomes" id="UP000000580">
    <property type="component" value="Chromosome"/>
</dbReference>
<dbReference type="GO" id="GO:0005737">
    <property type="term" value="C:cytoplasm"/>
    <property type="evidence" value="ECO:0007669"/>
    <property type="project" value="UniProtKB-SubCell"/>
</dbReference>
<dbReference type="GO" id="GO:0051539">
    <property type="term" value="F:4 iron, 4 sulfur cluster binding"/>
    <property type="evidence" value="ECO:0007669"/>
    <property type="project" value="UniProtKB-UniRule"/>
</dbReference>
<dbReference type="GO" id="GO:0016992">
    <property type="term" value="F:lipoate synthase activity"/>
    <property type="evidence" value="ECO:0007669"/>
    <property type="project" value="UniProtKB-UniRule"/>
</dbReference>
<dbReference type="GO" id="GO:0046872">
    <property type="term" value="F:metal ion binding"/>
    <property type="evidence" value="ECO:0007669"/>
    <property type="project" value="UniProtKB-KW"/>
</dbReference>
<dbReference type="CDD" id="cd01335">
    <property type="entry name" value="Radical_SAM"/>
    <property type="match status" value="1"/>
</dbReference>
<dbReference type="FunFam" id="3.20.20.70:FF:000116">
    <property type="entry name" value="Lipoyl synthase"/>
    <property type="match status" value="1"/>
</dbReference>
<dbReference type="Gene3D" id="3.20.20.70">
    <property type="entry name" value="Aldolase class I"/>
    <property type="match status" value="1"/>
</dbReference>
<dbReference type="HAMAP" id="MF_00206">
    <property type="entry name" value="Lipoyl_synth"/>
    <property type="match status" value="1"/>
</dbReference>
<dbReference type="InterPro" id="IPR013785">
    <property type="entry name" value="Aldolase_TIM"/>
</dbReference>
<dbReference type="InterPro" id="IPR006638">
    <property type="entry name" value="Elp3/MiaA/NifB-like_rSAM"/>
</dbReference>
<dbReference type="InterPro" id="IPR031691">
    <property type="entry name" value="LIAS_N"/>
</dbReference>
<dbReference type="InterPro" id="IPR003698">
    <property type="entry name" value="Lipoyl_synth"/>
</dbReference>
<dbReference type="InterPro" id="IPR007197">
    <property type="entry name" value="rSAM"/>
</dbReference>
<dbReference type="NCBIfam" id="TIGR00510">
    <property type="entry name" value="lipA"/>
    <property type="match status" value="1"/>
</dbReference>
<dbReference type="NCBIfam" id="NF004019">
    <property type="entry name" value="PRK05481.1"/>
    <property type="match status" value="1"/>
</dbReference>
<dbReference type="NCBIfam" id="NF009544">
    <property type="entry name" value="PRK12928.1"/>
    <property type="match status" value="1"/>
</dbReference>
<dbReference type="PANTHER" id="PTHR10949">
    <property type="entry name" value="LIPOYL SYNTHASE"/>
    <property type="match status" value="1"/>
</dbReference>
<dbReference type="PANTHER" id="PTHR10949:SF0">
    <property type="entry name" value="LIPOYL SYNTHASE, MITOCHONDRIAL"/>
    <property type="match status" value="1"/>
</dbReference>
<dbReference type="Pfam" id="PF16881">
    <property type="entry name" value="LIAS_N"/>
    <property type="match status" value="1"/>
</dbReference>
<dbReference type="Pfam" id="PF04055">
    <property type="entry name" value="Radical_SAM"/>
    <property type="match status" value="1"/>
</dbReference>
<dbReference type="PIRSF" id="PIRSF005963">
    <property type="entry name" value="Lipoyl_synth"/>
    <property type="match status" value="1"/>
</dbReference>
<dbReference type="SFLD" id="SFLDF00271">
    <property type="entry name" value="lipoyl_synthase"/>
    <property type="match status" value="1"/>
</dbReference>
<dbReference type="SFLD" id="SFLDG01058">
    <property type="entry name" value="lipoyl_synthase_like"/>
    <property type="match status" value="1"/>
</dbReference>
<dbReference type="SMART" id="SM00729">
    <property type="entry name" value="Elp3"/>
    <property type="match status" value="1"/>
</dbReference>
<dbReference type="SUPFAM" id="SSF102114">
    <property type="entry name" value="Radical SAM enzymes"/>
    <property type="match status" value="1"/>
</dbReference>
<dbReference type="PROSITE" id="PS51918">
    <property type="entry name" value="RADICAL_SAM"/>
    <property type="match status" value="1"/>
</dbReference>
<keyword id="KW-0004">4Fe-4S</keyword>
<keyword id="KW-0963">Cytoplasm</keyword>
<keyword id="KW-0408">Iron</keyword>
<keyword id="KW-0411">Iron-sulfur</keyword>
<keyword id="KW-0479">Metal-binding</keyword>
<keyword id="KW-1185">Reference proteome</keyword>
<keyword id="KW-0949">S-adenosyl-L-methionine</keyword>
<keyword id="KW-0808">Transferase</keyword>
<feature type="chain" id="PRO_0000102325" description="Lipoyl synthase">
    <location>
        <begin position="1"/>
        <end position="307"/>
    </location>
</feature>
<feature type="domain" description="Radical SAM core" evidence="2">
    <location>
        <begin position="67"/>
        <end position="281"/>
    </location>
</feature>
<feature type="binding site" evidence="1">
    <location>
        <position position="55"/>
    </location>
    <ligand>
        <name>[4Fe-4S] cluster</name>
        <dbReference type="ChEBI" id="CHEBI:49883"/>
        <label>1</label>
    </ligand>
</feature>
<feature type="binding site" evidence="1">
    <location>
        <position position="60"/>
    </location>
    <ligand>
        <name>[4Fe-4S] cluster</name>
        <dbReference type="ChEBI" id="CHEBI:49883"/>
        <label>1</label>
    </ligand>
</feature>
<feature type="binding site" evidence="1">
    <location>
        <position position="66"/>
    </location>
    <ligand>
        <name>[4Fe-4S] cluster</name>
        <dbReference type="ChEBI" id="CHEBI:49883"/>
        <label>1</label>
    </ligand>
</feature>
<feature type="binding site" evidence="1">
    <location>
        <position position="81"/>
    </location>
    <ligand>
        <name>[4Fe-4S] cluster</name>
        <dbReference type="ChEBI" id="CHEBI:49883"/>
        <label>2</label>
        <note>4Fe-4S-S-AdoMet</note>
    </ligand>
</feature>
<feature type="binding site" evidence="1">
    <location>
        <position position="85"/>
    </location>
    <ligand>
        <name>[4Fe-4S] cluster</name>
        <dbReference type="ChEBI" id="CHEBI:49883"/>
        <label>2</label>
        <note>4Fe-4S-S-AdoMet</note>
    </ligand>
</feature>
<feature type="binding site" evidence="1">
    <location>
        <position position="88"/>
    </location>
    <ligand>
        <name>[4Fe-4S] cluster</name>
        <dbReference type="ChEBI" id="CHEBI:49883"/>
        <label>2</label>
        <note>4Fe-4S-S-AdoMet</note>
    </ligand>
</feature>
<feature type="binding site" evidence="1">
    <location>
        <position position="292"/>
    </location>
    <ligand>
        <name>[4Fe-4S] cluster</name>
        <dbReference type="ChEBI" id="CHEBI:49883"/>
        <label>1</label>
    </ligand>
</feature>
<organism>
    <name type="scientific">Mycolicibacterium paratuberculosis (strain ATCC BAA-968 / K-10)</name>
    <name type="common">Mycobacterium paratuberculosis</name>
    <dbReference type="NCBI Taxonomy" id="262316"/>
    <lineage>
        <taxon>Bacteria</taxon>
        <taxon>Bacillati</taxon>
        <taxon>Actinomycetota</taxon>
        <taxon>Actinomycetes</taxon>
        <taxon>Mycobacteriales</taxon>
        <taxon>Mycobacteriaceae</taxon>
        <taxon>Mycobacterium</taxon>
        <taxon>Mycobacterium avium complex (MAC)</taxon>
    </lineage>
</organism>
<protein>
    <recommendedName>
        <fullName evidence="1">Lipoyl synthase</fullName>
        <ecNumber evidence="1">2.8.1.8</ecNumber>
    </recommendedName>
    <alternativeName>
        <fullName evidence="1">Lip-syn</fullName>
        <shortName evidence="1">LS</shortName>
    </alternativeName>
    <alternativeName>
        <fullName evidence="1">Lipoate synthase</fullName>
    </alternativeName>
    <alternativeName>
        <fullName evidence="1">Lipoic acid synthase</fullName>
    </alternativeName>
    <alternativeName>
        <fullName evidence="1">Sulfur insertion protein LipA</fullName>
    </alternativeName>
</protein>
<reference key="1">
    <citation type="journal article" date="2005" name="Proc. Natl. Acad. Sci. U.S.A.">
        <title>The complete genome sequence of Mycobacterium avium subspecies paratuberculosis.</title>
        <authorList>
            <person name="Li L."/>
            <person name="Bannantine J.P."/>
            <person name="Zhang Q."/>
            <person name="Amonsin A."/>
            <person name="May B.J."/>
            <person name="Alt D."/>
            <person name="Banerji N."/>
            <person name="Kanjilal S."/>
            <person name="Kapur V."/>
        </authorList>
    </citation>
    <scope>NUCLEOTIDE SEQUENCE [LARGE SCALE GENOMIC DNA]</scope>
    <source>
        <strain>ATCC BAA-968 / K-10</strain>
    </source>
</reference>
<name>LIPA_MYCPA</name>
<sequence>MTVAPEGRKLLRLEVRNAETPIERKPPWIRVRARMGPEYTELKSLVRREGLHTVCEEAGCPNIFECWEDREATFLIGGDQCTRRCDFCQIDTGKPAELDRDEPRRVADSVRTMGLRYATVTGVARDDLPDGGAWLYAETVRAIKELNPSTGVELLIPDFNGRPDRLAEVFGSRPEVLAHNVETVPRIFKRIRPAFTYRRSLDVLTAAREAGLVTKSNLILGLGETPDEVRTALADLRGAGCDIITITQYLRPSARHHPVERWVKPEEFVEFARHAEELGFSGVLAGPLVRSSYRAGRLYRQTARARA</sequence>
<proteinExistence type="inferred from homology"/>
<evidence type="ECO:0000255" key="1">
    <source>
        <dbReference type="HAMAP-Rule" id="MF_00206"/>
    </source>
</evidence>
<evidence type="ECO:0000255" key="2">
    <source>
        <dbReference type="PROSITE-ProRule" id="PRU01266"/>
    </source>
</evidence>
<accession>P61197</accession>
<gene>
    <name evidence="1" type="primary">lipA</name>
    <name type="ordered locus">MAP_1959</name>
</gene>
<comment type="function">
    <text evidence="1">Catalyzes the radical-mediated insertion of two sulfur atoms into the C-6 and C-8 positions of the octanoyl moiety bound to the lipoyl domains of lipoate-dependent enzymes, thereby converting the octanoylated domains into lipoylated derivatives.</text>
</comment>
<comment type="catalytic activity">
    <reaction evidence="1">
        <text>[[Fe-S] cluster scaffold protein carrying a second [4Fe-4S](2+) cluster] + N(6)-octanoyl-L-lysyl-[protein] + 2 oxidized [2Fe-2S]-[ferredoxin] + 2 S-adenosyl-L-methionine + 4 H(+) = [[Fe-S] cluster scaffold protein] + N(6)-[(R)-dihydrolipoyl]-L-lysyl-[protein] + 4 Fe(3+) + 2 hydrogen sulfide + 2 5'-deoxyadenosine + 2 L-methionine + 2 reduced [2Fe-2S]-[ferredoxin]</text>
        <dbReference type="Rhea" id="RHEA:16585"/>
        <dbReference type="Rhea" id="RHEA-COMP:9928"/>
        <dbReference type="Rhea" id="RHEA-COMP:10000"/>
        <dbReference type="Rhea" id="RHEA-COMP:10001"/>
        <dbReference type="Rhea" id="RHEA-COMP:10475"/>
        <dbReference type="Rhea" id="RHEA-COMP:14568"/>
        <dbReference type="Rhea" id="RHEA-COMP:14569"/>
        <dbReference type="ChEBI" id="CHEBI:15378"/>
        <dbReference type="ChEBI" id="CHEBI:17319"/>
        <dbReference type="ChEBI" id="CHEBI:29034"/>
        <dbReference type="ChEBI" id="CHEBI:29919"/>
        <dbReference type="ChEBI" id="CHEBI:33722"/>
        <dbReference type="ChEBI" id="CHEBI:33737"/>
        <dbReference type="ChEBI" id="CHEBI:33738"/>
        <dbReference type="ChEBI" id="CHEBI:57844"/>
        <dbReference type="ChEBI" id="CHEBI:59789"/>
        <dbReference type="ChEBI" id="CHEBI:78809"/>
        <dbReference type="ChEBI" id="CHEBI:83100"/>
        <dbReference type="EC" id="2.8.1.8"/>
    </reaction>
</comment>
<comment type="cofactor">
    <cofactor evidence="1">
        <name>[4Fe-4S] cluster</name>
        <dbReference type="ChEBI" id="CHEBI:49883"/>
    </cofactor>
    <text evidence="1">Binds 2 [4Fe-4S] clusters per subunit. One cluster is coordinated with 3 cysteines and an exchangeable S-adenosyl-L-methionine.</text>
</comment>
<comment type="pathway">
    <text evidence="1">Protein modification; protein lipoylation via endogenous pathway; protein N(6)-(lipoyl)lysine from octanoyl-[acyl-carrier-protein]: step 2/2.</text>
</comment>
<comment type="subcellular location">
    <subcellularLocation>
        <location evidence="1">Cytoplasm</location>
    </subcellularLocation>
</comment>
<comment type="similarity">
    <text evidence="1">Belongs to the radical SAM superfamily. Lipoyl synthase family.</text>
</comment>